<proteinExistence type="inferred from homology"/>
<protein>
    <recommendedName>
        <fullName evidence="1">Elongation factor P</fullName>
        <shortName evidence="1">EF-P</shortName>
    </recommendedName>
</protein>
<sequence>MIEVGDLKKGMFIIYDGEIYRVLEASKHFMGRGSGLIRTKLKNVKTGLVREVNFPSGDKVPEAELSFRKAQYLYRDGDHYYFMTLDDYEQYALSEEEIGDAKYYLVENMEVDLVFHEGTPIGIELPTTVELTVVETEPSFKGDTVSGGGKPAVLETGLKITVPYFIEVGDKIKVDTRTGEYVGRA</sequence>
<dbReference type="EMBL" id="CP000702">
    <property type="protein sequence ID" value="ABQ47068.1"/>
    <property type="molecule type" value="Genomic_DNA"/>
</dbReference>
<dbReference type="RefSeq" id="WP_011943598.1">
    <property type="nucleotide sequence ID" value="NC_009486.1"/>
</dbReference>
<dbReference type="SMR" id="A5ILJ5"/>
<dbReference type="STRING" id="390874.Tpet_1051"/>
<dbReference type="KEGG" id="tpt:Tpet_1051"/>
<dbReference type="eggNOG" id="COG0231">
    <property type="taxonomic scope" value="Bacteria"/>
</dbReference>
<dbReference type="HOGENOM" id="CLU_074944_0_1_0"/>
<dbReference type="UniPathway" id="UPA00345"/>
<dbReference type="Proteomes" id="UP000006558">
    <property type="component" value="Chromosome"/>
</dbReference>
<dbReference type="GO" id="GO:0005737">
    <property type="term" value="C:cytoplasm"/>
    <property type="evidence" value="ECO:0007669"/>
    <property type="project" value="UniProtKB-SubCell"/>
</dbReference>
<dbReference type="GO" id="GO:0003746">
    <property type="term" value="F:translation elongation factor activity"/>
    <property type="evidence" value="ECO:0007669"/>
    <property type="project" value="UniProtKB-UniRule"/>
</dbReference>
<dbReference type="GO" id="GO:0043043">
    <property type="term" value="P:peptide biosynthetic process"/>
    <property type="evidence" value="ECO:0007669"/>
    <property type="project" value="InterPro"/>
</dbReference>
<dbReference type="CDD" id="cd04470">
    <property type="entry name" value="S1_EF-P_repeat_1"/>
    <property type="match status" value="1"/>
</dbReference>
<dbReference type="CDD" id="cd05794">
    <property type="entry name" value="S1_EF-P_repeat_2"/>
    <property type="match status" value="1"/>
</dbReference>
<dbReference type="FunFam" id="2.30.30.30:FF:000003">
    <property type="entry name" value="Elongation factor P"/>
    <property type="match status" value="1"/>
</dbReference>
<dbReference type="FunFam" id="2.40.50.140:FF:000004">
    <property type="entry name" value="Elongation factor P"/>
    <property type="match status" value="1"/>
</dbReference>
<dbReference type="FunFam" id="2.40.50.140:FF:000009">
    <property type="entry name" value="Elongation factor P"/>
    <property type="match status" value="1"/>
</dbReference>
<dbReference type="Gene3D" id="2.30.30.30">
    <property type="match status" value="1"/>
</dbReference>
<dbReference type="Gene3D" id="2.40.50.140">
    <property type="entry name" value="Nucleic acid-binding proteins"/>
    <property type="match status" value="2"/>
</dbReference>
<dbReference type="HAMAP" id="MF_00141">
    <property type="entry name" value="EF_P"/>
    <property type="match status" value="1"/>
</dbReference>
<dbReference type="InterPro" id="IPR015365">
    <property type="entry name" value="Elong-fact-P_C"/>
</dbReference>
<dbReference type="InterPro" id="IPR012340">
    <property type="entry name" value="NA-bd_OB-fold"/>
</dbReference>
<dbReference type="InterPro" id="IPR014722">
    <property type="entry name" value="Rib_uL2_dom2"/>
</dbReference>
<dbReference type="InterPro" id="IPR020599">
    <property type="entry name" value="Transl_elong_fac_P/YeiP"/>
</dbReference>
<dbReference type="InterPro" id="IPR013185">
    <property type="entry name" value="Transl_elong_KOW-like"/>
</dbReference>
<dbReference type="InterPro" id="IPR001059">
    <property type="entry name" value="Transl_elong_P/YeiP_cen"/>
</dbReference>
<dbReference type="InterPro" id="IPR013852">
    <property type="entry name" value="Transl_elong_P/YeiP_CS"/>
</dbReference>
<dbReference type="InterPro" id="IPR011768">
    <property type="entry name" value="Transl_elongation_fac_P"/>
</dbReference>
<dbReference type="InterPro" id="IPR008991">
    <property type="entry name" value="Translation_prot_SH3-like_sf"/>
</dbReference>
<dbReference type="NCBIfam" id="TIGR00038">
    <property type="entry name" value="efp"/>
    <property type="match status" value="1"/>
</dbReference>
<dbReference type="NCBIfam" id="NF001810">
    <property type="entry name" value="PRK00529.1"/>
    <property type="match status" value="1"/>
</dbReference>
<dbReference type="PANTHER" id="PTHR30053">
    <property type="entry name" value="ELONGATION FACTOR P"/>
    <property type="match status" value="1"/>
</dbReference>
<dbReference type="PANTHER" id="PTHR30053:SF12">
    <property type="entry name" value="ELONGATION FACTOR P (EF-P) FAMILY PROTEIN"/>
    <property type="match status" value="1"/>
</dbReference>
<dbReference type="Pfam" id="PF01132">
    <property type="entry name" value="EFP"/>
    <property type="match status" value="1"/>
</dbReference>
<dbReference type="Pfam" id="PF08207">
    <property type="entry name" value="EFP_N"/>
    <property type="match status" value="1"/>
</dbReference>
<dbReference type="Pfam" id="PF09285">
    <property type="entry name" value="Elong-fact-P_C"/>
    <property type="match status" value="1"/>
</dbReference>
<dbReference type="PIRSF" id="PIRSF005901">
    <property type="entry name" value="EF-P"/>
    <property type="match status" value="1"/>
</dbReference>
<dbReference type="SMART" id="SM01185">
    <property type="entry name" value="EFP"/>
    <property type="match status" value="1"/>
</dbReference>
<dbReference type="SMART" id="SM00841">
    <property type="entry name" value="Elong-fact-P_C"/>
    <property type="match status" value="1"/>
</dbReference>
<dbReference type="SUPFAM" id="SSF50249">
    <property type="entry name" value="Nucleic acid-binding proteins"/>
    <property type="match status" value="2"/>
</dbReference>
<dbReference type="SUPFAM" id="SSF50104">
    <property type="entry name" value="Translation proteins SH3-like domain"/>
    <property type="match status" value="1"/>
</dbReference>
<dbReference type="PROSITE" id="PS01275">
    <property type="entry name" value="EFP"/>
    <property type="match status" value="1"/>
</dbReference>
<keyword id="KW-0963">Cytoplasm</keyword>
<keyword id="KW-0251">Elongation factor</keyword>
<keyword id="KW-0648">Protein biosynthesis</keyword>
<reference key="1">
    <citation type="submission" date="2007-05" db="EMBL/GenBank/DDBJ databases">
        <title>Complete sequence of Thermotoga petrophila RKU-1.</title>
        <authorList>
            <consortium name="US DOE Joint Genome Institute"/>
            <person name="Copeland A."/>
            <person name="Lucas S."/>
            <person name="Lapidus A."/>
            <person name="Barry K."/>
            <person name="Glavina del Rio T."/>
            <person name="Dalin E."/>
            <person name="Tice H."/>
            <person name="Pitluck S."/>
            <person name="Sims D."/>
            <person name="Brettin T."/>
            <person name="Bruce D."/>
            <person name="Detter J.C."/>
            <person name="Han C."/>
            <person name="Tapia R."/>
            <person name="Schmutz J."/>
            <person name="Larimer F."/>
            <person name="Land M."/>
            <person name="Hauser L."/>
            <person name="Kyrpides N."/>
            <person name="Mikhailova N."/>
            <person name="Nelson K."/>
            <person name="Gogarten J.P."/>
            <person name="Noll K."/>
            <person name="Richardson P."/>
        </authorList>
    </citation>
    <scope>NUCLEOTIDE SEQUENCE [LARGE SCALE GENOMIC DNA]</scope>
    <source>
        <strain>ATCC BAA-488 / DSM 13995 / JCM 10881 / RKU-1</strain>
    </source>
</reference>
<organism>
    <name type="scientific">Thermotoga petrophila (strain ATCC BAA-488 / DSM 13995 / JCM 10881 / RKU-1)</name>
    <dbReference type="NCBI Taxonomy" id="390874"/>
    <lineage>
        <taxon>Bacteria</taxon>
        <taxon>Thermotogati</taxon>
        <taxon>Thermotogota</taxon>
        <taxon>Thermotogae</taxon>
        <taxon>Thermotogales</taxon>
        <taxon>Thermotogaceae</taxon>
        <taxon>Thermotoga</taxon>
    </lineage>
</organism>
<comment type="function">
    <text evidence="1">Involved in peptide bond synthesis. Stimulates efficient translation and peptide-bond synthesis on native or reconstituted 70S ribosomes in vitro. Probably functions indirectly by altering the affinity of the ribosome for aminoacyl-tRNA, thus increasing their reactivity as acceptors for peptidyl transferase.</text>
</comment>
<comment type="pathway">
    <text evidence="1">Protein biosynthesis; polypeptide chain elongation.</text>
</comment>
<comment type="subcellular location">
    <subcellularLocation>
        <location evidence="1">Cytoplasm</location>
    </subcellularLocation>
</comment>
<comment type="similarity">
    <text evidence="1">Belongs to the elongation factor P family.</text>
</comment>
<evidence type="ECO:0000255" key="1">
    <source>
        <dbReference type="HAMAP-Rule" id="MF_00141"/>
    </source>
</evidence>
<feature type="chain" id="PRO_1000010891" description="Elongation factor P">
    <location>
        <begin position="1"/>
        <end position="185"/>
    </location>
</feature>
<name>EFP_THEP1</name>
<accession>A5ILJ5</accession>
<gene>
    <name evidence="1" type="primary">efp</name>
    <name type="ordered locus">Tpet_1051</name>
</gene>